<evidence type="ECO:0000255" key="1">
    <source>
        <dbReference type="HAMAP-Rule" id="MF_00268"/>
    </source>
</evidence>
<evidence type="ECO:0000256" key="2">
    <source>
        <dbReference type="SAM" id="MobiDB-lite"/>
    </source>
</evidence>
<evidence type="ECO:0000269" key="3">
    <source>
    </source>
</evidence>
<evidence type="ECO:0000269" key="4">
    <source>
    </source>
</evidence>
<evidence type="ECO:0000269" key="5">
    <source>
    </source>
</evidence>
<evidence type="ECO:0000305" key="6">
    <source>
    </source>
</evidence>
<comment type="function">
    <text evidence="1 3 6">Can catalyze the hydrolysis of ATP in the presence of single-stranded DNA, the ATP-dependent uptake of single-stranded DNA by duplex DNA, and the ATP-dependent hybridization of homologous single-stranded DNAs (By similarity). It interacts with LexA causing its activation and leading to its autocatalytic cleavage (By similarity). Required for DNA transformation; protects transforming DNA from degradation, possibly in combination with DprA (PubMed:14617176, PubMed:17803906). Present at 15,000-30,000 monomers per competent cell (PubMed:14617176).</text>
</comment>
<comment type="subunit">
    <text evidence="4">Interacts with DprA; probably forms mixed DprA-RecA-ssDNA filaments (PubMed:17803906).</text>
</comment>
<comment type="subcellular location">
    <subcellularLocation>
        <location evidence="1">Cytoplasm</location>
    </subcellularLocation>
</comment>
<comment type="induction">
    <text evidence="5">By competence and DNA damage (PubMed:7798154).</text>
</comment>
<comment type="disruption phenotype">
    <text evidence="3">Loss of DNA transformation; incoming DNA is very rapidly degraded (PubMed:14617176).</text>
</comment>
<comment type="similarity">
    <text evidence="1">Belongs to the RecA family.</text>
</comment>
<dbReference type="EMBL" id="AE007317">
    <property type="protein sequence ID" value="AAL00560.1"/>
    <property type="molecule type" value="Genomic_DNA"/>
</dbReference>
<dbReference type="EMBL" id="L36131">
    <property type="protein sequence ID" value="AAC09383.1"/>
    <property type="molecule type" value="Genomic_DNA"/>
</dbReference>
<dbReference type="PIR" id="C98091">
    <property type="entry name" value="C98091"/>
</dbReference>
<dbReference type="RefSeq" id="NP_359349.1">
    <property type="nucleotide sequence ID" value="NC_003098.1"/>
</dbReference>
<dbReference type="RefSeq" id="WP_001085462.1">
    <property type="nucleotide sequence ID" value="NC_003098.1"/>
</dbReference>
<dbReference type="PDB" id="8AMD">
    <property type="method" value="EM"/>
    <property type="resolution" value="3.90 A"/>
    <property type="chains" value="A/B/F/G=1-388"/>
</dbReference>
<dbReference type="PDB" id="8AMF">
    <property type="method" value="EM"/>
    <property type="resolution" value="3.80 A"/>
    <property type="chains" value="A/B/F/G=1-388"/>
</dbReference>
<dbReference type="PDBsum" id="8AMD"/>
<dbReference type="PDBsum" id="8AMF"/>
<dbReference type="EMDB" id="EMD-15524"/>
<dbReference type="EMDB" id="EMD-15525"/>
<dbReference type="SMR" id="P0A452"/>
<dbReference type="STRING" id="171101.spr1757"/>
<dbReference type="GeneID" id="45652840"/>
<dbReference type="KEGG" id="spr:spr1757"/>
<dbReference type="PATRIC" id="fig|171101.6.peg.1898"/>
<dbReference type="eggNOG" id="COG0468">
    <property type="taxonomic scope" value="Bacteria"/>
</dbReference>
<dbReference type="HOGENOM" id="CLU_040469_3_2_9"/>
<dbReference type="PHI-base" id="PHI:4702"/>
<dbReference type="Proteomes" id="UP000000586">
    <property type="component" value="Chromosome"/>
</dbReference>
<dbReference type="GO" id="GO:0005737">
    <property type="term" value="C:cytoplasm"/>
    <property type="evidence" value="ECO:0007669"/>
    <property type="project" value="UniProtKB-SubCell"/>
</dbReference>
<dbReference type="GO" id="GO:0005524">
    <property type="term" value="F:ATP binding"/>
    <property type="evidence" value="ECO:0007669"/>
    <property type="project" value="UniProtKB-UniRule"/>
</dbReference>
<dbReference type="GO" id="GO:0016887">
    <property type="term" value="F:ATP hydrolysis activity"/>
    <property type="evidence" value="ECO:0007669"/>
    <property type="project" value="InterPro"/>
</dbReference>
<dbReference type="GO" id="GO:0140664">
    <property type="term" value="F:ATP-dependent DNA damage sensor activity"/>
    <property type="evidence" value="ECO:0007669"/>
    <property type="project" value="InterPro"/>
</dbReference>
<dbReference type="GO" id="GO:0003684">
    <property type="term" value="F:damaged DNA binding"/>
    <property type="evidence" value="ECO:0007669"/>
    <property type="project" value="UniProtKB-UniRule"/>
</dbReference>
<dbReference type="GO" id="GO:0003697">
    <property type="term" value="F:single-stranded DNA binding"/>
    <property type="evidence" value="ECO:0007669"/>
    <property type="project" value="UniProtKB-UniRule"/>
</dbReference>
<dbReference type="GO" id="GO:0006310">
    <property type="term" value="P:DNA recombination"/>
    <property type="evidence" value="ECO:0007669"/>
    <property type="project" value="UniProtKB-UniRule"/>
</dbReference>
<dbReference type="GO" id="GO:0006281">
    <property type="term" value="P:DNA repair"/>
    <property type="evidence" value="ECO:0007669"/>
    <property type="project" value="UniProtKB-UniRule"/>
</dbReference>
<dbReference type="GO" id="GO:0030420">
    <property type="term" value="P:establishment of competence for transformation"/>
    <property type="evidence" value="ECO:0000315"/>
    <property type="project" value="UniProtKB"/>
</dbReference>
<dbReference type="GO" id="GO:0009432">
    <property type="term" value="P:SOS response"/>
    <property type="evidence" value="ECO:0007669"/>
    <property type="project" value="UniProtKB-UniRule"/>
</dbReference>
<dbReference type="CDD" id="cd00983">
    <property type="entry name" value="RecA"/>
    <property type="match status" value="1"/>
</dbReference>
<dbReference type="FunFam" id="3.40.50.300:FF:000087">
    <property type="entry name" value="Recombinase RecA"/>
    <property type="match status" value="1"/>
</dbReference>
<dbReference type="Gene3D" id="3.40.50.300">
    <property type="entry name" value="P-loop containing nucleotide triphosphate hydrolases"/>
    <property type="match status" value="1"/>
</dbReference>
<dbReference type="HAMAP" id="MF_00268">
    <property type="entry name" value="RecA"/>
    <property type="match status" value="1"/>
</dbReference>
<dbReference type="InterPro" id="IPR003593">
    <property type="entry name" value="AAA+_ATPase"/>
</dbReference>
<dbReference type="InterPro" id="IPR013765">
    <property type="entry name" value="DNA_recomb/repair_RecA"/>
</dbReference>
<dbReference type="InterPro" id="IPR020584">
    <property type="entry name" value="DNA_recomb/repair_RecA_CS"/>
</dbReference>
<dbReference type="InterPro" id="IPR027417">
    <property type="entry name" value="P-loop_NTPase"/>
</dbReference>
<dbReference type="InterPro" id="IPR049261">
    <property type="entry name" value="RecA-like_C"/>
</dbReference>
<dbReference type="InterPro" id="IPR049428">
    <property type="entry name" value="RecA-like_N"/>
</dbReference>
<dbReference type="InterPro" id="IPR020588">
    <property type="entry name" value="RecA_ATP-bd"/>
</dbReference>
<dbReference type="InterPro" id="IPR023400">
    <property type="entry name" value="RecA_C_sf"/>
</dbReference>
<dbReference type="InterPro" id="IPR020587">
    <property type="entry name" value="RecA_monomer-monomer_interface"/>
</dbReference>
<dbReference type="NCBIfam" id="TIGR02012">
    <property type="entry name" value="tigrfam_recA"/>
    <property type="match status" value="1"/>
</dbReference>
<dbReference type="PANTHER" id="PTHR45900:SF1">
    <property type="entry name" value="MITOCHONDRIAL DNA REPAIR PROTEIN RECA HOMOLOG-RELATED"/>
    <property type="match status" value="1"/>
</dbReference>
<dbReference type="PANTHER" id="PTHR45900">
    <property type="entry name" value="RECA"/>
    <property type="match status" value="1"/>
</dbReference>
<dbReference type="Pfam" id="PF00154">
    <property type="entry name" value="RecA"/>
    <property type="match status" value="1"/>
</dbReference>
<dbReference type="Pfam" id="PF21096">
    <property type="entry name" value="RecA_C"/>
    <property type="match status" value="1"/>
</dbReference>
<dbReference type="PRINTS" id="PR00142">
    <property type="entry name" value="RECA"/>
</dbReference>
<dbReference type="SMART" id="SM00382">
    <property type="entry name" value="AAA"/>
    <property type="match status" value="1"/>
</dbReference>
<dbReference type="SUPFAM" id="SSF52540">
    <property type="entry name" value="P-loop containing nucleoside triphosphate hydrolases"/>
    <property type="match status" value="1"/>
</dbReference>
<dbReference type="SUPFAM" id="SSF54752">
    <property type="entry name" value="RecA protein, C-terminal domain"/>
    <property type="match status" value="1"/>
</dbReference>
<dbReference type="PROSITE" id="PS00321">
    <property type="entry name" value="RECA_1"/>
    <property type="match status" value="1"/>
</dbReference>
<dbReference type="PROSITE" id="PS50162">
    <property type="entry name" value="RECA_2"/>
    <property type="match status" value="1"/>
</dbReference>
<dbReference type="PROSITE" id="PS50163">
    <property type="entry name" value="RECA_3"/>
    <property type="match status" value="1"/>
</dbReference>
<reference key="1">
    <citation type="journal article" date="2001" name="J. Bacteriol.">
        <title>Genome of the bacterium Streptococcus pneumoniae strain R6.</title>
        <authorList>
            <person name="Hoskins J."/>
            <person name="Alborn W.E. Jr."/>
            <person name="Arnold J."/>
            <person name="Blaszczak L.C."/>
            <person name="Burgett S."/>
            <person name="DeHoff B.S."/>
            <person name="Estrem S.T."/>
            <person name="Fritz L."/>
            <person name="Fu D.-J."/>
            <person name="Fuller W."/>
            <person name="Geringer C."/>
            <person name="Gilmour R."/>
            <person name="Glass J.S."/>
            <person name="Khoja H."/>
            <person name="Kraft A.R."/>
            <person name="Lagace R.E."/>
            <person name="LeBlanc D.J."/>
            <person name="Lee L.N."/>
            <person name="Lefkowitz E.J."/>
            <person name="Lu J."/>
            <person name="Matsushima P."/>
            <person name="McAhren S.M."/>
            <person name="McHenney M."/>
            <person name="McLeaster K."/>
            <person name="Mundy C.W."/>
            <person name="Nicas T.I."/>
            <person name="Norris F.H."/>
            <person name="O'Gara M."/>
            <person name="Peery R.B."/>
            <person name="Robertson G.T."/>
            <person name="Rockey P."/>
            <person name="Sun P.-M."/>
            <person name="Winkler M.E."/>
            <person name="Yang Y."/>
            <person name="Young-Bellido M."/>
            <person name="Zhao G."/>
            <person name="Zook C.A."/>
            <person name="Baltz R.H."/>
            <person name="Jaskunas S.R."/>
            <person name="Rosteck P.R. Jr."/>
            <person name="Skatrud P.L."/>
            <person name="Glass J.I."/>
        </authorList>
    </citation>
    <scope>NUCLEOTIDE SEQUENCE [LARGE SCALE GENOMIC DNA]</scope>
    <source>
        <strain>ATCC BAA-255 / R6</strain>
    </source>
</reference>
<reference key="2">
    <citation type="journal article" date="1995" name="J. Bacteriol.">
        <title>The rec locus, a competence-induced operon in Streptococcus pneumoniae.</title>
        <authorList>
            <person name="Pearce B.J."/>
            <person name="Naughton A.M."/>
            <person name="Campbell E.A."/>
            <person name="Masure H.R."/>
        </authorList>
    </citation>
    <scope>NUCLEOTIDE SEQUENCE [GENOMIC DNA] OF 1-11</scope>
    <scope>INDUCTION</scope>
</reference>
<reference key="3">
    <citation type="journal article" date="2003" name="Mol. Microbiol.">
        <title>Transformation of Streptococcus pneumoniae relies on DprA- and RecA-dependent protection of incoming DNA single strands.</title>
        <authorList>
            <person name="Berge M."/>
            <person name="Mortier-Barriere I."/>
            <person name="Martin B."/>
            <person name="Claverys J.P."/>
        </authorList>
    </citation>
    <scope>FUNCTION</scope>
    <scope>PROTEIN LEVEL</scope>
    <scope>DISRUPTION PHENOTYPE</scope>
    <source>
        <strain>R6 / R800</strain>
    </source>
</reference>
<reference key="4">
    <citation type="journal article" date="2007" name="Cell">
        <title>A key presynaptic role in transformation for a widespread bacterial protein: DprA conveys incoming ssDNA to RecA.</title>
        <authorList>
            <person name="Mortier-Barriere I."/>
            <person name="Velten M."/>
            <person name="Dupaigne P."/>
            <person name="Mirouze N."/>
            <person name="Pietrement O."/>
            <person name="McGovern S."/>
            <person name="Fichant G."/>
            <person name="Martin B."/>
            <person name="Noirot P."/>
            <person name="Le Cam E."/>
            <person name="Polard P."/>
            <person name="Claverys J.P."/>
        </authorList>
    </citation>
    <scope>FUNCTION</scope>
    <scope>INTERACTION WITH DPRA</scope>
    <scope>SUBUNIT</scope>
    <scope>DNA-BINDING</scope>
    <source>
        <strain>R6 / R800</strain>
    </source>
</reference>
<gene>
    <name evidence="1" type="primary">recA</name>
    <name type="ordered locus">spr1757</name>
</gene>
<accession>P0A452</accession>
<accession>P30758</accession>
<organism>
    <name type="scientific">Streptococcus pneumoniae (strain ATCC BAA-255 / R6)</name>
    <dbReference type="NCBI Taxonomy" id="171101"/>
    <lineage>
        <taxon>Bacteria</taxon>
        <taxon>Bacillati</taxon>
        <taxon>Bacillota</taxon>
        <taxon>Bacilli</taxon>
        <taxon>Lactobacillales</taxon>
        <taxon>Streptococcaceae</taxon>
        <taxon>Streptococcus</taxon>
    </lineage>
</organism>
<sequence>MAKKPKKLEEISKKFGAEREKALNDALKLIEKDFGKGSIMRLGERAEQKVQVMSSGSLALDIALGSGGYPKGRIIEIYGPESSGKTTVALHAVAQAQKEGGIAAFIDAEHALDPAYAAALGVNIDELLLSQPDSGEQGLEIAGKLIDSGAVDLVVVDSVAALVPRAEIDGDIGDSHVGLQARMMSQAMRKLGASINKTKTIAIFINQLREKVGVMFGNPETTPGGRALKFYASVRLDVRGNTQIKGTGDQKETNVGKETKIKVVKNKVAPPFKEAVVEIMYGEGISKTGELLKIASDLDIIKKAGAWYSYKDEKIGQGSENAKKYLAEHPEIFDEIDKQVRSKFGLIDGEEVSEQDTENKKDEPKKEEAVNEEVPLDLGDELEIEIEE</sequence>
<keyword id="KW-0002">3D-structure</keyword>
<keyword id="KW-0067">ATP-binding</keyword>
<keyword id="KW-0178">Competence</keyword>
<keyword id="KW-0963">Cytoplasm</keyword>
<keyword id="KW-0227">DNA damage</keyword>
<keyword id="KW-0233">DNA recombination</keyword>
<keyword id="KW-0234">DNA repair</keyword>
<keyword id="KW-0238">DNA-binding</keyword>
<keyword id="KW-0547">Nucleotide-binding</keyword>
<keyword id="KW-1185">Reference proteome</keyword>
<keyword id="KW-0742">SOS response</keyword>
<protein>
    <recommendedName>
        <fullName evidence="1">Protein RecA</fullName>
    </recommendedName>
    <alternativeName>
        <fullName evidence="1">Recombinase A</fullName>
    </alternativeName>
</protein>
<feature type="chain" id="PRO_0000122860" description="Protein RecA">
    <location>
        <begin position="1"/>
        <end position="388"/>
    </location>
</feature>
<feature type="region of interest" description="Disordered" evidence="2">
    <location>
        <begin position="347"/>
        <end position="388"/>
    </location>
</feature>
<feature type="compositionally biased region" description="Basic and acidic residues" evidence="2">
    <location>
        <begin position="357"/>
        <end position="369"/>
    </location>
</feature>
<feature type="compositionally biased region" description="Acidic residues" evidence="2">
    <location>
        <begin position="370"/>
        <end position="388"/>
    </location>
</feature>
<feature type="binding site" evidence="1">
    <location>
        <begin position="79"/>
        <end position="86"/>
    </location>
    <ligand>
        <name>ATP</name>
        <dbReference type="ChEBI" id="CHEBI:30616"/>
    </ligand>
</feature>
<name>RECA_STRR6</name>
<proteinExistence type="evidence at protein level"/>